<keyword id="KW-0274">FAD</keyword>
<keyword id="KW-0285">Flavoprotein</keyword>
<keyword id="KW-0472">Membrane</keyword>
<keyword id="KW-0496">Mitochondrion</keyword>
<keyword id="KW-1000">Mitochondrion outer membrane</keyword>
<keyword id="KW-0520">NAD</keyword>
<keyword id="KW-0560">Oxidoreductase</keyword>
<keyword id="KW-1185">Reference proteome</keyword>
<keyword id="KW-0812">Transmembrane</keyword>
<keyword id="KW-1133">Transmembrane helix</keyword>
<reference key="1">
    <citation type="journal article" date="2009" name="Nature">
        <title>Evolution of pathogenicity and sexual reproduction in eight Candida genomes.</title>
        <authorList>
            <person name="Butler G."/>
            <person name="Rasmussen M.D."/>
            <person name="Lin M.F."/>
            <person name="Santos M.A.S."/>
            <person name="Sakthikumar S."/>
            <person name="Munro C.A."/>
            <person name="Rheinbay E."/>
            <person name="Grabherr M."/>
            <person name="Forche A."/>
            <person name="Reedy J.L."/>
            <person name="Agrafioti I."/>
            <person name="Arnaud M.B."/>
            <person name="Bates S."/>
            <person name="Brown A.J.P."/>
            <person name="Brunke S."/>
            <person name="Costanzo M.C."/>
            <person name="Fitzpatrick D.A."/>
            <person name="de Groot P.W.J."/>
            <person name="Harris D."/>
            <person name="Hoyer L.L."/>
            <person name="Hube B."/>
            <person name="Klis F.M."/>
            <person name="Kodira C."/>
            <person name="Lennard N."/>
            <person name="Logue M.E."/>
            <person name="Martin R."/>
            <person name="Neiman A.M."/>
            <person name="Nikolaou E."/>
            <person name="Quail M.A."/>
            <person name="Quinn J."/>
            <person name="Santos M.C."/>
            <person name="Schmitzberger F.F."/>
            <person name="Sherlock G."/>
            <person name="Shah P."/>
            <person name="Silverstein K.A.T."/>
            <person name="Skrzypek M.S."/>
            <person name="Soll D."/>
            <person name="Staggs R."/>
            <person name="Stansfield I."/>
            <person name="Stumpf M.P.H."/>
            <person name="Sudbery P.E."/>
            <person name="Srikantha T."/>
            <person name="Zeng Q."/>
            <person name="Berman J."/>
            <person name="Berriman M."/>
            <person name="Heitman J."/>
            <person name="Gow N.A.R."/>
            <person name="Lorenz M.C."/>
            <person name="Birren B.W."/>
            <person name="Kellis M."/>
            <person name="Cuomo C.A."/>
        </authorList>
    </citation>
    <scope>NUCLEOTIDE SEQUENCE [LARGE SCALE GENOMIC DNA]</scope>
    <source>
        <strain>ATCC 6260 / CBS 566 / DSM 6381 / JCM 1539 / NBRC 10279 / NRRL Y-324</strain>
    </source>
</reference>
<feature type="chain" id="PRO_0000330188" description="NADH-cytochrome b5 reductase 2">
    <location>
        <begin position="1"/>
        <end position="294"/>
    </location>
</feature>
<feature type="transmembrane region" description="Helical" evidence="2">
    <location>
        <begin position="11"/>
        <end position="27"/>
    </location>
</feature>
<feature type="domain" description="FAD-binding FR-type" evidence="3">
    <location>
        <begin position="45"/>
        <end position="149"/>
    </location>
</feature>
<feature type="binding site" evidence="1">
    <location>
        <begin position="152"/>
        <end position="187"/>
    </location>
    <ligand>
        <name>FAD</name>
        <dbReference type="ChEBI" id="CHEBI:57692"/>
    </ligand>
</feature>
<protein>
    <recommendedName>
        <fullName>NADH-cytochrome b5 reductase 2</fullName>
        <ecNumber>1.6.2.2</ecNumber>
    </recommendedName>
    <alternativeName>
        <fullName>Mitochondrial cytochrome b reductase</fullName>
    </alternativeName>
</protein>
<accession>A5DQE4</accession>
<sequence>MSLARFTQPRVLLPVVAAATSIGLVYHYSSLSIQNDTAKTFKGGDEWIDLKLKKSWDVSSNTRHFVFELKSPEDVSGLVTASCLMTKFVTAKGNNVIRPYTPVSDVDQKGTIDFVIKKYDGGKMSTHFHGLKEGDTVSFKGPIVKWKWEPNQFQSIALIGGGTGITPLYQLLHEITKNPEDKTKVKLFYGNLTEEDILIKKELDDIAEKHKDQVSITYFVDKASANWKGETGHIDKEFLQSNLPGPSKDSKVFVCGPPGLYKALSGVKVSPTDQGEVTGVLAELGYTKENVYKF</sequence>
<gene>
    <name type="primary">MCR1</name>
    <name type="ORF">PGUG_05495</name>
</gene>
<proteinExistence type="inferred from homology"/>
<name>MCR1_PICGU</name>
<comment type="function">
    <text evidence="1">May mediate the reduction of outer membrane cytochrome b5.</text>
</comment>
<comment type="catalytic activity">
    <reaction>
        <text>2 Fe(III)-[cytochrome b5] + NADH = 2 Fe(II)-[cytochrome b5] + NAD(+) + H(+)</text>
        <dbReference type="Rhea" id="RHEA:46680"/>
        <dbReference type="Rhea" id="RHEA-COMP:10438"/>
        <dbReference type="Rhea" id="RHEA-COMP:10439"/>
        <dbReference type="ChEBI" id="CHEBI:15378"/>
        <dbReference type="ChEBI" id="CHEBI:29033"/>
        <dbReference type="ChEBI" id="CHEBI:29034"/>
        <dbReference type="ChEBI" id="CHEBI:57540"/>
        <dbReference type="ChEBI" id="CHEBI:57945"/>
        <dbReference type="EC" id="1.6.2.2"/>
    </reaction>
</comment>
<comment type="cofactor">
    <cofactor evidence="1">
        <name>FAD</name>
        <dbReference type="ChEBI" id="CHEBI:57692"/>
    </cofactor>
</comment>
<comment type="subcellular location">
    <subcellularLocation>
        <location evidence="1">Mitochondrion outer membrane</location>
        <topology evidence="1">Single-pass membrane protein</topology>
    </subcellularLocation>
</comment>
<comment type="similarity">
    <text evidence="4">Belongs to the flavoprotein pyridine nucleotide cytochrome reductase family.</text>
</comment>
<organism>
    <name type="scientific">Meyerozyma guilliermondii (strain ATCC 6260 / CBS 566 / DSM 6381 / JCM 1539 / NBRC 10279 / NRRL Y-324)</name>
    <name type="common">Yeast</name>
    <name type="synonym">Candida guilliermondii</name>
    <dbReference type="NCBI Taxonomy" id="294746"/>
    <lineage>
        <taxon>Eukaryota</taxon>
        <taxon>Fungi</taxon>
        <taxon>Dikarya</taxon>
        <taxon>Ascomycota</taxon>
        <taxon>Saccharomycotina</taxon>
        <taxon>Pichiomycetes</taxon>
        <taxon>Debaryomycetaceae</taxon>
        <taxon>Meyerozyma</taxon>
    </lineage>
</organism>
<evidence type="ECO:0000250" key="1"/>
<evidence type="ECO:0000255" key="2"/>
<evidence type="ECO:0000255" key="3">
    <source>
        <dbReference type="PROSITE-ProRule" id="PRU00716"/>
    </source>
</evidence>
<evidence type="ECO:0000305" key="4"/>
<dbReference type="EC" id="1.6.2.2"/>
<dbReference type="EMBL" id="CH408161">
    <property type="protein sequence ID" value="EDK41397.2"/>
    <property type="molecule type" value="Genomic_DNA"/>
</dbReference>
<dbReference type="RefSeq" id="XP_001482475.1">
    <property type="nucleotide sequence ID" value="XM_001482425.1"/>
</dbReference>
<dbReference type="SMR" id="A5DQE4"/>
<dbReference type="FunCoup" id="A5DQE4">
    <property type="interactions" value="335"/>
</dbReference>
<dbReference type="STRING" id="294746.A5DQE4"/>
<dbReference type="GeneID" id="5124220"/>
<dbReference type="KEGG" id="pgu:PGUG_05495"/>
<dbReference type="VEuPathDB" id="FungiDB:PGUG_05495"/>
<dbReference type="eggNOG" id="KOG0534">
    <property type="taxonomic scope" value="Eukaryota"/>
</dbReference>
<dbReference type="HOGENOM" id="CLU_003827_9_1_1"/>
<dbReference type="InParanoid" id="A5DQE4"/>
<dbReference type="OMA" id="KGPEMQK"/>
<dbReference type="OrthoDB" id="432685at2759"/>
<dbReference type="Proteomes" id="UP000001997">
    <property type="component" value="Unassembled WGS sequence"/>
</dbReference>
<dbReference type="GO" id="GO:0005741">
    <property type="term" value="C:mitochondrial outer membrane"/>
    <property type="evidence" value="ECO:0007669"/>
    <property type="project" value="UniProtKB-SubCell"/>
</dbReference>
<dbReference type="GO" id="GO:0004128">
    <property type="term" value="F:cytochrome-b5 reductase activity, acting on NAD(P)H"/>
    <property type="evidence" value="ECO:0007669"/>
    <property type="project" value="UniProtKB-EC"/>
</dbReference>
<dbReference type="GO" id="GO:0006696">
    <property type="term" value="P:ergosterol biosynthetic process"/>
    <property type="evidence" value="ECO:0007669"/>
    <property type="project" value="TreeGrafter"/>
</dbReference>
<dbReference type="CDD" id="cd06183">
    <property type="entry name" value="cyt_b5_reduct_like"/>
    <property type="match status" value="1"/>
</dbReference>
<dbReference type="FunFam" id="2.40.30.10:FF:000032">
    <property type="entry name" value="NADH-cytochrome b5 reductase"/>
    <property type="match status" value="1"/>
</dbReference>
<dbReference type="FunFam" id="3.40.50.80:FF:000009">
    <property type="entry name" value="NADH-cytochrome b5 reductase"/>
    <property type="match status" value="1"/>
</dbReference>
<dbReference type="Gene3D" id="3.40.50.80">
    <property type="entry name" value="Nucleotide-binding domain of ferredoxin-NADP reductase (FNR) module"/>
    <property type="match status" value="1"/>
</dbReference>
<dbReference type="Gene3D" id="2.40.30.10">
    <property type="entry name" value="Translation factors"/>
    <property type="match status" value="1"/>
</dbReference>
<dbReference type="InterPro" id="IPR001834">
    <property type="entry name" value="CBR-like"/>
</dbReference>
<dbReference type="InterPro" id="IPR008333">
    <property type="entry name" value="Cbr1-like_FAD-bd_dom"/>
</dbReference>
<dbReference type="InterPro" id="IPR017927">
    <property type="entry name" value="FAD-bd_FR_type"/>
</dbReference>
<dbReference type="InterPro" id="IPR001709">
    <property type="entry name" value="Flavoprot_Pyr_Nucl_cyt_Rdtase"/>
</dbReference>
<dbReference type="InterPro" id="IPR039261">
    <property type="entry name" value="FNR_nucleotide-bd"/>
</dbReference>
<dbReference type="InterPro" id="IPR001433">
    <property type="entry name" value="OxRdtase_FAD/NAD-bd"/>
</dbReference>
<dbReference type="InterPro" id="IPR017938">
    <property type="entry name" value="Riboflavin_synthase-like_b-brl"/>
</dbReference>
<dbReference type="PANTHER" id="PTHR19370">
    <property type="entry name" value="NADH-CYTOCHROME B5 REDUCTASE"/>
    <property type="match status" value="1"/>
</dbReference>
<dbReference type="PANTHER" id="PTHR19370:SF171">
    <property type="entry name" value="NADH-CYTOCHROME B5 REDUCTASE 2"/>
    <property type="match status" value="1"/>
</dbReference>
<dbReference type="Pfam" id="PF00970">
    <property type="entry name" value="FAD_binding_6"/>
    <property type="match status" value="1"/>
</dbReference>
<dbReference type="Pfam" id="PF00175">
    <property type="entry name" value="NAD_binding_1"/>
    <property type="match status" value="1"/>
</dbReference>
<dbReference type="PRINTS" id="PR00406">
    <property type="entry name" value="CYTB5RDTASE"/>
</dbReference>
<dbReference type="PRINTS" id="PR00371">
    <property type="entry name" value="FPNCR"/>
</dbReference>
<dbReference type="SUPFAM" id="SSF52343">
    <property type="entry name" value="Ferredoxin reductase-like, C-terminal NADP-linked domain"/>
    <property type="match status" value="1"/>
</dbReference>
<dbReference type="SUPFAM" id="SSF63380">
    <property type="entry name" value="Riboflavin synthase domain-like"/>
    <property type="match status" value="1"/>
</dbReference>
<dbReference type="PROSITE" id="PS51384">
    <property type="entry name" value="FAD_FR"/>
    <property type="match status" value="1"/>
</dbReference>